<geneLocation type="chloroplast"/>
<dbReference type="EMBL" id="AJ316582">
    <property type="protein sequence ID" value="CAC88041.1"/>
    <property type="molecule type" value="Genomic_DNA"/>
</dbReference>
<dbReference type="RefSeq" id="NP_783229.1">
    <property type="nucleotide sequence ID" value="NC_004561.1"/>
</dbReference>
<dbReference type="SMR" id="P59706"/>
<dbReference type="GeneID" id="806458"/>
<dbReference type="GO" id="GO:0009535">
    <property type="term" value="C:chloroplast thylakoid membrane"/>
    <property type="evidence" value="ECO:0007669"/>
    <property type="project" value="UniProtKB-SubCell"/>
</dbReference>
<dbReference type="GO" id="GO:0009539">
    <property type="term" value="C:photosystem II reaction center"/>
    <property type="evidence" value="ECO:0007669"/>
    <property type="project" value="InterPro"/>
</dbReference>
<dbReference type="GO" id="GO:0015979">
    <property type="term" value="P:photosynthesis"/>
    <property type="evidence" value="ECO:0007669"/>
    <property type="project" value="UniProtKB-UniRule"/>
</dbReference>
<dbReference type="GO" id="GO:0042549">
    <property type="term" value="P:photosystem II stabilization"/>
    <property type="evidence" value="ECO:0007669"/>
    <property type="project" value="InterPro"/>
</dbReference>
<dbReference type="FunFam" id="1.10.287.740:FF:000001">
    <property type="entry name" value="Photosystem II reaction center protein Z"/>
    <property type="match status" value="1"/>
</dbReference>
<dbReference type="Gene3D" id="1.10.287.740">
    <property type="entry name" value="Photosystem II PsbZ, reaction centre"/>
    <property type="match status" value="1"/>
</dbReference>
<dbReference type="HAMAP" id="MF_00644">
    <property type="entry name" value="PSII_PsbZ"/>
    <property type="match status" value="1"/>
</dbReference>
<dbReference type="InterPro" id="IPR002644">
    <property type="entry name" value="PSII_PsbZ"/>
</dbReference>
<dbReference type="InterPro" id="IPR036512">
    <property type="entry name" value="PSII_PsbZ_sf"/>
</dbReference>
<dbReference type="NCBIfam" id="TIGR03043">
    <property type="entry name" value="PS_II_psbZ"/>
    <property type="match status" value="1"/>
</dbReference>
<dbReference type="PANTHER" id="PTHR34971">
    <property type="entry name" value="PHOTOSYSTEM II REACTION CENTER PROTEIN Z"/>
    <property type="match status" value="1"/>
</dbReference>
<dbReference type="PANTHER" id="PTHR34971:SF2">
    <property type="entry name" value="PHOTOSYSTEM II REACTION CENTER PROTEIN Z"/>
    <property type="match status" value="1"/>
</dbReference>
<dbReference type="Pfam" id="PF01737">
    <property type="entry name" value="Ycf9"/>
    <property type="match status" value="1"/>
</dbReference>
<dbReference type="SUPFAM" id="SSF161055">
    <property type="entry name" value="PsbZ-like"/>
    <property type="match status" value="1"/>
</dbReference>
<comment type="function">
    <text evidence="1">May control the interaction of photosystem II (PSII) cores with the light-harvesting antenna, regulates electron flow through the 2 photosystem reaction centers. PSII is a light-driven water plastoquinone oxidoreductase, using light energy to abstract electrons from H(2)O, generating a proton gradient subsequently used for ATP formation.</text>
</comment>
<comment type="subunit">
    <text evidence="1">PSII is composed of 1 copy each of membrane proteins PsbA, PsbB, PsbC, PsbD, PsbE, PsbF, PsbH, PsbI, PsbJ, PsbK, PsbL, PsbM, PsbT, PsbY, PsbZ, Psb30/Ycf12, at least 3 peripheral proteins of the oxygen-evolving complex and a large number of cofactors. It forms dimeric complexes.</text>
</comment>
<comment type="subcellular location">
    <subcellularLocation>
        <location evidence="1">Plastid</location>
        <location evidence="1">Chloroplast thylakoid membrane</location>
        <topology evidence="1">Multi-pass membrane protein</topology>
    </subcellularLocation>
</comment>
<comment type="similarity">
    <text evidence="1">Belongs to the PsbZ family.</text>
</comment>
<name>PSBZ_ATRBE</name>
<sequence>MTLAFQLAVFALIATSLILLISVPVVFASPDGWSSNKNVVFSGTSLWIGLVFLVGILNSLIS</sequence>
<accession>P59706</accession>
<gene>
    <name evidence="1" type="primary">psbZ</name>
    <name type="synonym">ycf9</name>
</gene>
<organism>
    <name type="scientific">Atropa belladonna</name>
    <name type="common">Belladonna</name>
    <name type="synonym">Deadly nightshade</name>
    <dbReference type="NCBI Taxonomy" id="33113"/>
    <lineage>
        <taxon>Eukaryota</taxon>
        <taxon>Viridiplantae</taxon>
        <taxon>Streptophyta</taxon>
        <taxon>Embryophyta</taxon>
        <taxon>Tracheophyta</taxon>
        <taxon>Spermatophyta</taxon>
        <taxon>Magnoliopsida</taxon>
        <taxon>eudicotyledons</taxon>
        <taxon>Gunneridae</taxon>
        <taxon>Pentapetalae</taxon>
        <taxon>asterids</taxon>
        <taxon>lamiids</taxon>
        <taxon>Solanales</taxon>
        <taxon>Solanaceae</taxon>
        <taxon>Solanoideae</taxon>
        <taxon>Hyoscyameae</taxon>
        <taxon>Atropa</taxon>
    </lineage>
</organism>
<feature type="chain" id="PRO_0000217690" description="Photosystem II reaction center protein Z">
    <location>
        <begin position="1"/>
        <end position="62"/>
    </location>
</feature>
<feature type="transmembrane region" description="Helical" evidence="1">
    <location>
        <begin position="8"/>
        <end position="28"/>
    </location>
</feature>
<feature type="transmembrane region" description="Helical" evidence="1">
    <location>
        <begin position="41"/>
        <end position="61"/>
    </location>
</feature>
<protein>
    <recommendedName>
        <fullName evidence="1">Photosystem II reaction center protein Z</fullName>
        <shortName evidence="1">PSII-Z</shortName>
    </recommendedName>
</protein>
<evidence type="ECO:0000255" key="1">
    <source>
        <dbReference type="HAMAP-Rule" id="MF_00644"/>
    </source>
</evidence>
<proteinExistence type="inferred from homology"/>
<keyword id="KW-0150">Chloroplast</keyword>
<keyword id="KW-0472">Membrane</keyword>
<keyword id="KW-0602">Photosynthesis</keyword>
<keyword id="KW-0604">Photosystem II</keyword>
<keyword id="KW-0934">Plastid</keyword>
<keyword id="KW-0674">Reaction center</keyword>
<keyword id="KW-0793">Thylakoid</keyword>
<keyword id="KW-0812">Transmembrane</keyword>
<keyword id="KW-1133">Transmembrane helix</keyword>
<reference key="1">
    <citation type="journal article" date="2002" name="Mol. Biol. Evol.">
        <title>The plastid chromosome of Atropa belladonna and its comparison with that of Nicotiana tabacum: the role of RNA editing in generating divergence in the process of plant speciation.</title>
        <authorList>
            <person name="Schmitz-Linneweber C."/>
            <person name="Regel R."/>
            <person name="Du T.G."/>
            <person name="Hupfer H."/>
            <person name="Herrmann R.G."/>
            <person name="Maier R.M."/>
        </authorList>
    </citation>
    <scope>NUCLEOTIDE SEQUENCE [LARGE SCALE GENOMIC DNA]</scope>
    <source>
        <strain>cv. Ab5p(kan)</strain>
    </source>
</reference>